<name>SYQ_VIBVY</name>
<comment type="catalytic activity">
    <reaction evidence="1">
        <text>tRNA(Gln) + L-glutamine + ATP = L-glutaminyl-tRNA(Gln) + AMP + diphosphate</text>
        <dbReference type="Rhea" id="RHEA:20121"/>
        <dbReference type="Rhea" id="RHEA-COMP:9662"/>
        <dbReference type="Rhea" id="RHEA-COMP:9681"/>
        <dbReference type="ChEBI" id="CHEBI:30616"/>
        <dbReference type="ChEBI" id="CHEBI:33019"/>
        <dbReference type="ChEBI" id="CHEBI:58359"/>
        <dbReference type="ChEBI" id="CHEBI:78442"/>
        <dbReference type="ChEBI" id="CHEBI:78521"/>
        <dbReference type="ChEBI" id="CHEBI:456215"/>
        <dbReference type="EC" id="6.1.1.18"/>
    </reaction>
</comment>
<comment type="subunit">
    <text evidence="1">Monomer.</text>
</comment>
<comment type="subcellular location">
    <subcellularLocation>
        <location evidence="1">Cytoplasm</location>
    </subcellularLocation>
</comment>
<comment type="similarity">
    <text evidence="1">Belongs to the class-I aminoacyl-tRNA synthetase family.</text>
</comment>
<organism>
    <name type="scientific">Vibrio vulnificus (strain YJ016)</name>
    <dbReference type="NCBI Taxonomy" id="196600"/>
    <lineage>
        <taxon>Bacteria</taxon>
        <taxon>Pseudomonadati</taxon>
        <taxon>Pseudomonadota</taxon>
        <taxon>Gammaproteobacteria</taxon>
        <taxon>Vibrionales</taxon>
        <taxon>Vibrionaceae</taxon>
        <taxon>Vibrio</taxon>
    </lineage>
</organism>
<gene>
    <name evidence="1" type="primary">glnS</name>
    <name type="ordered locus">VV1013</name>
</gene>
<reference key="1">
    <citation type="journal article" date="2003" name="Genome Res.">
        <title>Comparative genome analysis of Vibrio vulnificus, a marine pathogen.</title>
        <authorList>
            <person name="Chen C.-Y."/>
            <person name="Wu K.-M."/>
            <person name="Chang Y.-C."/>
            <person name="Chang C.-H."/>
            <person name="Tsai H.-C."/>
            <person name="Liao T.-L."/>
            <person name="Liu Y.-M."/>
            <person name="Chen H.-J."/>
            <person name="Shen A.B.-T."/>
            <person name="Li J.-C."/>
            <person name="Su T.-L."/>
            <person name="Shao C.-P."/>
            <person name="Lee C.-T."/>
            <person name="Hor L.-I."/>
            <person name="Tsai S.-F."/>
        </authorList>
    </citation>
    <scope>NUCLEOTIDE SEQUENCE [LARGE SCALE GENOMIC DNA]</scope>
    <source>
        <strain>YJ016</strain>
    </source>
</reference>
<proteinExistence type="inferred from homology"/>
<sequence length="556" mass="63928">MSEADARPSNFIRQIIDKDLADGKHTSVHTRFPPEPNGYLHIGHAKSICLNFGIAQDYQGKCNLRFDDTNPEKEDIEYVESIKNDVSWLGFEWDDEICYSSNYFDKLYEYAVELINKGLAYVDELSPEQIREYRGTLTAPGKPSPYRDRSAEENLALFEKMRDGGFEEGKACLRAKIDMASSFMVMRDPVLYRVRFASHHQTGDKWCIYPMYDFTHCISDALEGITHSICTLEFMDNRRLYDWVLDNITIDCRPHQYEFSRLNLEYTVMSKRKLNQLVTEKLVNGWDDPRMPTISGLRRRGFTPASIREFCKRIGVTKQENMIEFSSLESCIRDDLNENAPRAMAVLDPVKLVIENFPAGEVENLTVANHPNKPEMGEREVPFSREIWIEREDFREEANKKYKRLVLGSEVRLRGAYVIKAERVEKDDEGNITTIFCTYDSETLGVNPADGRKVRGVIHWVSADKGVPAEIRLYDRLFTVPNPAAADDFASTINPESLTVMNGFVEPSLVEAEAEKGYQFERMGYFCADSKDSSKEHLVFNRTVGLRDTWAKIEAK</sequence>
<protein>
    <recommendedName>
        <fullName evidence="1">Glutamine--tRNA ligase</fullName>
        <ecNumber evidence="1">6.1.1.18</ecNumber>
    </recommendedName>
    <alternativeName>
        <fullName evidence="1">Glutaminyl-tRNA synthetase</fullName>
        <shortName evidence="1">GlnRS</shortName>
    </alternativeName>
</protein>
<keyword id="KW-0030">Aminoacyl-tRNA synthetase</keyword>
<keyword id="KW-0067">ATP-binding</keyword>
<keyword id="KW-0963">Cytoplasm</keyword>
<keyword id="KW-0436">Ligase</keyword>
<keyword id="KW-0547">Nucleotide-binding</keyword>
<keyword id="KW-0648">Protein biosynthesis</keyword>
<feature type="chain" id="PRO_0000195854" description="Glutamine--tRNA ligase">
    <location>
        <begin position="1"/>
        <end position="556"/>
    </location>
</feature>
<feature type="short sequence motif" description="'HIGH' region" evidence="1">
    <location>
        <begin position="34"/>
        <end position="44"/>
    </location>
</feature>
<feature type="short sequence motif" description="'KMSKS' region" evidence="1">
    <location>
        <begin position="268"/>
        <end position="272"/>
    </location>
</feature>
<feature type="binding site" evidence="1">
    <location>
        <begin position="35"/>
        <end position="37"/>
    </location>
    <ligand>
        <name>ATP</name>
        <dbReference type="ChEBI" id="CHEBI:30616"/>
    </ligand>
</feature>
<feature type="binding site" evidence="1">
    <location>
        <begin position="41"/>
        <end position="47"/>
    </location>
    <ligand>
        <name>ATP</name>
        <dbReference type="ChEBI" id="CHEBI:30616"/>
    </ligand>
</feature>
<feature type="binding site" evidence="1">
    <location>
        <position position="67"/>
    </location>
    <ligand>
        <name>L-glutamine</name>
        <dbReference type="ChEBI" id="CHEBI:58359"/>
    </ligand>
</feature>
<feature type="binding site" evidence="1">
    <location>
        <position position="212"/>
    </location>
    <ligand>
        <name>L-glutamine</name>
        <dbReference type="ChEBI" id="CHEBI:58359"/>
    </ligand>
</feature>
<feature type="binding site" evidence="1">
    <location>
        <position position="231"/>
    </location>
    <ligand>
        <name>ATP</name>
        <dbReference type="ChEBI" id="CHEBI:30616"/>
    </ligand>
</feature>
<feature type="binding site" evidence="1">
    <location>
        <begin position="261"/>
        <end position="262"/>
    </location>
    <ligand>
        <name>ATP</name>
        <dbReference type="ChEBI" id="CHEBI:30616"/>
    </ligand>
</feature>
<feature type="binding site" evidence="1">
    <location>
        <begin position="269"/>
        <end position="271"/>
    </location>
    <ligand>
        <name>ATP</name>
        <dbReference type="ChEBI" id="CHEBI:30616"/>
    </ligand>
</feature>
<accession>Q7MMQ4</accession>
<dbReference type="EC" id="6.1.1.18" evidence="1"/>
<dbReference type="EMBL" id="BA000037">
    <property type="protein sequence ID" value="BAC93777.1"/>
    <property type="molecule type" value="Genomic_DNA"/>
</dbReference>
<dbReference type="RefSeq" id="WP_011078293.1">
    <property type="nucleotide sequence ID" value="NC_005139.1"/>
</dbReference>
<dbReference type="SMR" id="Q7MMQ4"/>
<dbReference type="STRING" id="672.VV93_v1c09360"/>
<dbReference type="KEGG" id="vvy:VV1013"/>
<dbReference type="eggNOG" id="COG0008">
    <property type="taxonomic scope" value="Bacteria"/>
</dbReference>
<dbReference type="HOGENOM" id="CLU_001882_2_3_6"/>
<dbReference type="Proteomes" id="UP000002675">
    <property type="component" value="Chromosome I"/>
</dbReference>
<dbReference type="GO" id="GO:0005829">
    <property type="term" value="C:cytosol"/>
    <property type="evidence" value="ECO:0007669"/>
    <property type="project" value="TreeGrafter"/>
</dbReference>
<dbReference type="GO" id="GO:0005524">
    <property type="term" value="F:ATP binding"/>
    <property type="evidence" value="ECO:0007669"/>
    <property type="project" value="UniProtKB-UniRule"/>
</dbReference>
<dbReference type="GO" id="GO:0004819">
    <property type="term" value="F:glutamine-tRNA ligase activity"/>
    <property type="evidence" value="ECO:0007669"/>
    <property type="project" value="UniProtKB-UniRule"/>
</dbReference>
<dbReference type="GO" id="GO:0006425">
    <property type="term" value="P:glutaminyl-tRNA aminoacylation"/>
    <property type="evidence" value="ECO:0007669"/>
    <property type="project" value="InterPro"/>
</dbReference>
<dbReference type="GO" id="GO:0006424">
    <property type="term" value="P:glutamyl-tRNA aminoacylation"/>
    <property type="evidence" value="ECO:0007669"/>
    <property type="project" value="UniProtKB-UniRule"/>
</dbReference>
<dbReference type="CDD" id="cd00807">
    <property type="entry name" value="GlnRS_core"/>
    <property type="match status" value="1"/>
</dbReference>
<dbReference type="FunFam" id="1.10.1160.10:FF:000001">
    <property type="entry name" value="Glutamine--tRNA ligase"/>
    <property type="match status" value="1"/>
</dbReference>
<dbReference type="FunFam" id="2.40.240.10:FF:000001">
    <property type="entry name" value="Glutamine--tRNA ligase"/>
    <property type="match status" value="1"/>
</dbReference>
<dbReference type="FunFam" id="2.40.240.10:FF:000003">
    <property type="entry name" value="Glutamine--tRNA ligase"/>
    <property type="match status" value="1"/>
</dbReference>
<dbReference type="FunFam" id="3.90.800.10:FF:000001">
    <property type="entry name" value="Glutamine--tRNA ligase"/>
    <property type="match status" value="1"/>
</dbReference>
<dbReference type="FunFam" id="3.40.50.620:FF:000037">
    <property type="entry name" value="Glutamine--tRNA ligase cytoplasmic"/>
    <property type="match status" value="1"/>
</dbReference>
<dbReference type="Gene3D" id="1.10.1160.10">
    <property type="entry name" value="Glutamyl-trna Synthetase, Domain 2"/>
    <property type="match status" value="1"/>
</dbReference>
<dbReference type="Gene3D" id="3.90.800.10">
    <property type="entry name" value="Glutamyl-tRNA Synthetase, Domain 3"/>
    <property type="match status" value="1"/>
</dbReference>
<dbReference type="Gene3D" id="3.40.50.620">
    <property type="entry name" value="HUPs"/>
    <property type="match status" value="1"/>
</dbReference>
<dbReference type="Gene3D" id="2.40.240.10">
    <property type="entry name" value="Ribosomal Protein L25, Chain P"/>
    <property type="match status" value="2"/>
</dbReference>
<dbReference type="HAMAP" id="MF_00126">
    <property type="entry name" value="Gln_tRNA_synth"/>
    <property type="match status" value="1"/>
</dbReference>
<dbReference type="InterPro" id="IPR001412">
    <property type="entry name" value="aa-tRNA-synth_I_CS"/>
</dbReference>
<dbReference type="InterPro" id="IPR004514">
    <property type="entry name" value="Gln-tRNA-synth"/>
</dbReference>
<dbReference type="InterPro" id="IPR050132">
    <property type="entry name" value="Gln/Glu-tRNA_Ligase"/>
</dbReference>
<dbReference type="InterPro" id="IPR022861">
    <property type="entry name" value="Gln_tRNA_ligase_bac"/>
</dbReference>
<dbReference type="InterPro" id="IPR000924">
    <property type="entry name" value="Glu/Gln-tRNA-synth"/>
</dbReference>
<dbReference type="InterPro" id="IPR020058">
    <property type="entry name" value="Glu/Gln-tRNA-synth_Ib_cat-dom"/>
</dbReference>
<dbReference type="InterPro" id="IPR020059">
    <property type="entry name" value="Glu/Gln-tRNA-synth_Ib_codon-bd"/>
</dbReference>
<dbReference type="InterPro" id="IPR020061">
    <property type="entry name" value="Glu_tRNA_lig_a-bdl"/>
</dbReference>
<dbReference type="InterPro" id="IPR020056">
    <property type="entry name" value="Rbsml_bL25/Gln-tRNA_synth_N"/>
</dbReference>
<dbReference type="InterPro" id="IPR011035">
    <property type="entry name" value="Ribosomal_bL25/Gln-tRNA_synth"/>
</dbReference>
<dbReference type="InterPro" id="IPR014729">
    <property type="entry name" value="Rossmann-like_a/b/a_fold"/>
</dbReference>
<dbReference type="InterPro" id="IPR049437">
    <property type="entry name" value="tRNA-synt_1c_C2"/>
</dbReference>
<dbReference type="NCBIfam" id="TIGR00440">
    <property type="entry name" value="glnS"/>
    <property type="match status" value="1"/>
</dbReference>
<dbReference type="NCBIfam" id="NF011291">
    <property type="entry name" value="PRK14703.1"/>
    <property type="match status" value="1"/>
</dbReference>
<dbReference type="PANTHER" id="PTHR43097:SF5">
    <property type="entry name" value="GLUTAMATE--TRNA LIGASE"/>
    <property type="match status" value="1"/>
</dbReference>
<dbReference type="PANTHER" id="PTHR43097">
    <property type="entry name" value="GLUTAMINE-TRNA LIGASE"/>
    <property type="match status" value="1"/>
</dbReference>
<dbReference type="Pfam" id="PF00749">
    <property type="entry name" value="tRNA-synt_1c"/>
    <property type="match status" value="1"/>
</dbReference>
<dbReference type="Pfam" id="PF03950">
    <property type="entry name" value="tRNA-synt_1c_C"/>
    <property type="match status" value="1"/>
</dbReference>
<dbReference type="Pfam" id="PF20974">
    <property type="entry name" value="tRNA-synt_1c_C2"/>
    <property type="match status" value="1"/>
</dbReference>
<dbReference type="PRINTS" id="PR00987">
    <property type="entry name" value="TRNASYNTHGLU"/>
</dbReference>
<dbReference type="SUPFAM" id="SSF52374">
    <property type="entry name" value="Nucleotidylyl transferase"/>
    <property type="match status" value="1"/>
</dbReference>
<dbReference type="SUPFAM" id="SSF50715">
    <property type="entry name" value="Ribosomal protein L25-like"/>
    <property type="match status" value="1"/>
</dbReference>
<dbReference type="PROSITE" id="PS00178">
    <property type="entry name" value="AA_TRNA_LIGASE_I"/>
    <property type="match status" value="1"/>
</dbReference>
<evidence type="ECO:0000255" key="1">
    <source>
        <dbReference type="HAMAP-Rule" id="MF_00126"/>
    </source>
</evidence>